<keyword id="KW-1015">Disulfide bond</keyword>
<keyword id="KW-0325">Glycoprotein</keyword>
<keyword id="KW-0406">Ion transport</keyword>
<keyword id="KW-0408">Iron</keyword>
<keyword id="KW-0410">Iron transport</keyword>
<keyword id="KW-0479">Metal-binding</keyword>
<keyword id="KW-1185">Reference proteome</keyword>
<keyword id="KW-0677">Repeat</keyword>
<keyword id="KW-0964">Secreted</keyword>
<keyword id="KW-0813">Transport</keyword>
<organism>
    <name type="scientific">Gadus morhua</name>
    <name type="common">Atlantic cod</name>
    <dbReference type="NCBI Taxonomy" id="8049"/>
    <lineage>
        <taxon>Eukaryota</taxon>
        <taxon>Metazoa</taxon>
        <taxon>Chordata</taxon>
        <taxon>Craniata</taxon>
        <taxon>Vertebrata</taxon>
        <taxon>Euteleostomi</taxon>
        <taxon>Actinopterygii</taxon>
        <taxon>Neopterygii</taxon>
        <taxon>Teleostei</taxon>
        <taxon>Neoteleostei</taxon>
        <taxon>Acanthomorphata</taxon>
        <taxon>Zeiogadaria</taxon>
        <taxon>Gadariae</taxon>
        <taxon>Gadiformes</taxon>
        <taxon>Gadoidei</taxon>
        <taxon>Gadidae</taxon>
        <taxon>Gadus</taxon>
    </lineage>
</organism>
<sequence>GIKEADATECILAIKAGEADAITLDGGEIYTAGQHPYDLQPIISEKYGSGSSCYYAVAVVKKDTGFSFKQLRGKKSCHTGIGKTAGWNIPIGTLLTTGQLVWSGQEDLPVESVSTFFSKSCVPGAGGLVGGKLCTLCPSDCSKSATNPYFGYAGAFKCLKDDAGDVAFINHLTVPASEKANYELLCLDGTRAPIDSYKTCNLARVPAHAVVSRVDPELAERIFTALTTVTGFSFFSSAGFGAANLMFKDTTQSLVRLPDGSNSFLYLGAKYMASIQSLKKESDQPITPAIKWCAVGHAEKKKCDSWSSFSVSDGVKSVACQISLTVEGCFQRIMRQEADAMSVDGGQVYTAGKCQLIPAMVEQYNQSLCSSAGTPQATYFAVAVVKKGSGVTWDNLRGKRSCHTGLGRTAGWNIPMGLVHSIHGSCDFGGFFPSGCAPGSEPSSTFCRQCAGSGSGVEDGSKCSASSVEKYYGYAGAFRCLVDGAGDVAFIKHTIVADNSDGQGPAWATALKSSDYQLICPGGVGRAEISDFASCNLAAVPSHAVVTRQDIRDDVVKMLLDQQRKFGIDGSDPLFRIYESKDGNNLLFKDSTKCLKEIPSLTTADAFLGTGYVNAIMSLRQCPETASELEKTCISSSCSTAE</sequence>
<feature type="chain" id="PRO_0000082441" description="Serotransferrin">
    <location>
        <begin position="1" status="less than"/>
        <end position="642"/>
    </location>
</feature>
<feature type="domain" description="Transferrin-like 1" evidence="3">
    <location>
        <begin position="1"/>
        <end position="280"/>
    </location>
</feature>
<feature type="domain" description="Transferrin-like 2" evidence="3">
    <location>
        <begin position="290"/>
        <end position="621"/>
    </location>
</feature>
<feature type="binding site" evidence="3">
    <location>
        <position position="25"/>
    </location>
    <ligand>
        <name>Fe(3+)</name>
        <dbReference type="ChEBI" id="CHEBI:29034"/>
        <label>1</label>
    </ligand>
</feature>
<feature type="binding site" evidence="3">
    <location>
        <position position="54"/>
    </location>
    <ligand>
        <name>Fe(3+)</name>
        <dbReference type="ChEBI" id="CHEBI:29034"/>
        <label>1</label>
    </ligand>
</feature>
<feature type="binding site" evidence="3">
    <location>
        <position position="79"/>
    </location>
    <ligand>
        <name>hydrogencarbonate</name>
        <dbReference type="ChEBI" id="CHEBI:17544"/>
        <label>1</label>
    </ligand>
</feature>
<feature type="binding site" evidence="3">
    <location>
        <position position="83"/>
    </location>
    <ligand>
        <name>hydrogencarbonate</name>
        <dbReference type="ChEBI" id="CHEBI:17544"/>
        <label>1</label>
    </ligand>
</feature>
<feature type="binding site" evidence="3">
    <location>
        <position position="85"/>
    </location>
    <ligand>
        <name>hydrogencarbonate</name>
        <dbReference type="ChEBI" id="CHEBI:17544"/>
        <label>1</label>
    </ligand>
</feature>
<feature type="binding site" evidence="3">
    <location>
        <position position="86"/>
    </location>
    <ligand>
        <name>hydrogencarbonate</name>
        <dbReference type="ChEBI" id="CHEBI:17544"/>
        <label>1</label>
    </ligand>
</feature>
<feature type="binding site" evidence="3">
    <location>
        <position position="152"/>
    </location>
    <ligand>
        <name>Fe(3+)</name>
        <dbReference type="ChEBI" id="CHEBI:29034"/>
        <label>1</label>
    </ligand>
</feature>
<feature type="binding site" evidence="3">
    <location>
        <position position="208"/>
    </location>
    <ligand>
        <name>Fe(3+)</name>
        <dbReference type="ChEBI" id="CHEBI:29034"/>
        <label>1</label>
    </ligand>
</feature>
<feature type="binding site" evidence="3">
    <location>
        <position position="344"/>
    </location>
    <ligand>
        <name>Fe(3+)</name>
        <dbReference type="ChEBI" id="CHEBI:29034"/>
        <label>2</label>
    </ligand>
</feature>
<feature type="binding site" evidence="3">
    <location>
        <position position="379"/>
    </location>
    <ligand>
        <name>Fe(3+)</name>
        <dbReference type="ChEBI" id="CHEBI:29034"/>
        <label>2</label>
    </ligand>
</feature>
<feature type="binding site" evidence="3">
    <location>
        <position position="404"/>
    </location>
    <ligand>
        <name>hydrogencarbonate</name>
        <dbReference type="ChEBI" id="CHEBI:17544"/>
        <label>2</label>
    </ligand>
</feature>
<feature type="binding site" evidence="3">
    <location>
        <position position="408"/>
    </location>
    <ligand>
        <name>hydrogencarbonate</name>
        <dbReference type="ChEBI" id="CHEBI:17544"/>
        <label>2</label>
    </ligand>
</feature>
<feature type="binding site" evidence="3">
    <location>
        <position position="410"/>
    </location>
    <ligand>
        <name>hydrogencarbonate</name>
        <dbReference type="ChEBI" id="CHEBI:17544"/>
        <label>2</label>
    </ligand>
</feature>
<feature type="binding site" evidence="3">
    <location>
        <position position="411"/>
    </location>
    <ligand>
        <name>hydrogencarbonate</name>
        <dbReference type="ChEBI" id="CHEBI:17544"/>
        <label>2</label>
    </ligand>
</feature>
<feature type="binding site" evidence="3">
    <location>
        <position position="474"/>
    </location>
    <ligand>
        <name>Fe(3+)</name>
        <dbReference type="ChEBI" id="CHEBI:29034"/>
        <label>2</label>
    </ligand>
</feature>
<feature type="binding site" evidence="3">
    <location>
        <position position="543"/>
    </location>
    <ligand>
        <name>Fe(3+)</name>
        <dbReference type="ChEBI" id="CHEBI:29034"/>
        <label>2</label>
    </ligand>
</feature>
<feature type="glycosylation site" description="N-linked (GlcNAc...) asparagine" evidence="2">
    <location>
        <position position="365"/>
    </location>
</feature>
<feature type="disulfide bond" evidence="3">
    <location>
        <begin position="77"/>
        <end position="158"/>
    </location>
</feature>
<feature type="disulfide bond" evidence="3">
    <location>
        <begin position="121"/>
        <end position="137"/>
    </location>
</feature>
<feature type="disulfide bond" evidence="3">
    <location>
        <begin position="186"/>
        <end position="200"/>
    </location>
</feature>
<feature type="disulfide bond" evidence="3">
    <location>
        <begin position="293"/>
        <end position="329"/>
    </location>
</feature>
<feature type="disulfide bond" evidence="3">
    <location>
        <begin position="303"/>
        <end position="320"/>
    </location>
</feature>
<feature type="disulfide bond" evidence="3">
    <location>
        <begin position="354"/>
        <end position="633"/>
    </location>
</feature>
<feature type="disulfide bond" evidence="3">
    <location>
        <begin position="369"/>
        <end position="594"/>
    </location>
</feature>
<feature type="disulfide bond" evidence="3">
    <location>
        <begin position="402"/>
        <end position="480"/>
    </location>
</feature>
<feature type="disulfide bond" evidence="3">
    <location>
        <begin position="426"/>
        <end position="622"/>
    </location>
</feature>
<feature type="disulfide bond" evidence="3">
    <location>
        <begin position="436"/>
        <end position="450"/>
    </location>
</feature>
<feature type="disulfide bond" evidence="3">
    <location>
        <begin position="447"/>
        <end position="463"/>
    </location>
</feature>
<feature type="disulfide bond" evidence="3">
    <location>
        <begin position="520"/>
        <end position="535"/>
    </location>
</feature>
<feature type="non-terminal residue">
    <location>
        <position position="1"/>
    </location>
</feature>
<proteinExistence type="evidence at transcript level"/>
<accession>Q92079</accession>
<protein>
    <recommendedName>
        <fullName>Serotransferrin</fullName>
    </recommendedName>
</protein>
<gene>
    <name type="primary">tf</name>
</gene>
<dbReference type="EMBL" id="L40370">
    <property type="protein sequence ID" value="AAB08440.1"/>
    <property type="molecule type" value="mRNA"/>
</dbReference>
<dbReference type="SMR" id="Q92079"/>
<dbReference type="STRING" id="8049.ENSGMOP00000011156"/>
<dbReference type="MEROPS" id="S60.970"/>
<dbReference type="GlyCosmos" id="Q92079">
    <property type="glycosylation" value="1 site, No reported glycans"/>
</dbReference>
<dbReference type="Proteomes" id="UP000694546">
    <property type="component" value="Unplaced"/>
</dbReference>
<dbReference type="GO" id="GO:0005769">
    <property type="term" value="C:early endosome"/>
    <property type="evidence" value="ECO:0007669"/>
    <property type="project" value="TreeGrafter"/>
</dbReference>
<dbReference type="GO" id="GO:0005615">
    <property type="term" value="C:extracellular space"/>
    <property type="evidence" value="ECO:0007669"/>
    <property type="project" value="InterPro"/>
</dbReference>
<dbReference type="GO" id="GO:0005886">
    <property type="term" value="C:plasma membrane"/>
    <property type="evidence" value="ECO:0007669"/>
    <property type="project" value="TreeGrafter"/>
</dbReference>
<dbReference type="GO" id="GO:0055037">
    <property type="term" value="C:recycling endosome"/>
    <property type="evidence" value="ECO:0007669"/>
    <property type="project" value="TreeGrafter"/>
</dbReference>
<dbReference type="GO" id="GO:0046872">
    <property type="term" value="F:metal ion binding"/>
    <property type="evidence" value="ECO:0007669"/>
    <property type="project" value="UniProtKB-KW"/>
</dbReference>
<dbReference type="GO" id="GO:0019731">
    <property type="term" value="P:antibacterial humoral response"/>
    <property type="evidence" value="ECO:0007669"/>
    <property type="project" value="TreeGrafter"/>
</dbReference>
<dbReference type="GO" id="GO:0006826">
    <property type="term" value="P:iron ion transport"/>
    <property type="evidence" value="ECO:0007669"/>
    <property type="project" value="UniProtKB-KW"/>
</dbReference>
<dbReference type="FunFam" id="3.40.190.10:FF:000095">
    <property type="entry name" value="Lactotransferrin"/>
    <property type="match status" value="2"/>
</dbReference>
<dbReference type="Gene3D" id="3.40.190.10">
    <property type="entry name" value="Periplasmic binding protein-like II"/>
    <property type="match status" value="4"/>
</dbReference>
<dbReference type="InterPro" id="IPR016357">
    <property type="entry name" value="Transferrin"/>
</dbReference>
<dbReference type="InterPro" id="IPR001156">
    <property type="entry name" value="Transferrin-like_dom"/>
</dbReference>
<dbReference type="InterPro" id="IPR018195">
    <property type="entry name" value="Transferrin_Fe_BS"/>
</dbReference>
<dbReference type="PANTHER" id="PTHR11485:SF31">
    <property type="entry name" value="SEROTRANSFERRIN"/>
    <property type="match status" value="1"/>
</dbReference>
<dbReference type="PANTHER" id="PTHR11485">
    <property type="entry name" value="TRANSFERRIN"/>
    <property type="match status" value="1"/>
</dbReference>
<dbReference type="Pfam" id="PF00405">
    <property type="entry name" value="Transferrin"/>
    <property type="match status" value="2"/>
</dbReference>
<dbReference type="PIRSF" id="PIRSF002549">
    <property type="entry name" value="Transferrin"/>
    <property type="match status" value="1"/>
</dbReference>
<dbReference type="PRINTS" id="PR00422">
    <property type="entry name" value="TRANSFERRIN"/>
</dbReference>
<dbReference type="SMART" id="SM00094">
    <property type="entry name" value="TR_FER"/>
    <property type="match status" value="2"/>
</dbReference>
<dbReference type="SUPFAM" id="SSF53850">
    <property type="entry name" value="Periplasmic binding protein-like II"/>
    <property type="match status" value="2"/>
</dbReference>
<dbReference type="PROSITE" id="PS00205">
    <property type="entry name" value="TRANSFERRIN_LIKE_1"/>
    <property type="match status" value="2"/>
</dbReference>
<dbReference type="PROSITE" id="PS00206">
    <property type="entry name" value="TRANSFERRIN_LIKE_2"/>
    <property type="match status" value="2"/>
</dbReference>
<dbReference type="PROSITE" id="PS00207">
    <property type="entry name" value="TRANSFERRIN_LIKE_3"/>
    <property type="match status" value="1"/>
</dbReference>
<dbReference type="PROSITE" id="PS51408">
    <property type="entry name" value="TRANSFERRIN_LIKE_4"/>
    <property type="match status" value="2"/>
</dbReference>
<evidence type="ECO:0000250" key="1">
    <source>
        <dbReference type="UniProtKB" id="P02787"/>
    </source>
</evidence>
<evidence type="ECO:0000255" key="2"/>
<evidence type="ECO:0000255" key="3">
    <source>
        <dbReference type="PROSITE-ProRule" id="PRU00741"/>
    </source>
</evidence>
<reference key="1">
    <citation type="journal article" date="1996" name="Comp. Biochem. Physiol.">
        <title>Nucleotide sequence of transferrin cDNAs and tissue-specific of the transferrin gene in Atlantic cod (Gadus morhua).</title>
        <authorList>
            <person name="Denovan-Wright E.M."/>
            <person name="Ramsey N.B."/>
            <person name="McCormick C.J."/>
            <person name="Lazier C.B."/>
            <person name="Wright J.M."/>
        </authorList>
    </citation>
    <scope>NUCLEOTIDE SEQUENCE [MRNA]</scope>
    <source>
        <tissue>Liver</tissue>
    </source>
</reference>
<name>TRFE_GADMO</name>
<comment type="function">
    <text>Transferrins are iron binding transport proteins which can bind two Fe(3+) ions in association with the binding of an anion, usually bicarbonate.</text>
</comment>
<comment type="subunit">
    <text evidence="1">Monomer.</text>
</comment>
<comment type="subcellular location">
    <subcellularLocation>
        <location>Secreted</location>
    </subcellularLocation>
</comment>
<comment type="tissue specificity">
    <text>Brain and liver; to a lesser extent in kidney and heart.</text>
</comment>
<comment type="similarity">
    <text evidence="3">Belongs to the transferrin family.</text>
</comment>